<organism>
    <name type="scientific">Nostoc commune</name>
    <dbReference type="NCBI Taxonomy" id="1178"/>
    <lineage>
        <taxon>Bacteria</taxon>
        <taxon>Bacillati</taxon>
        <taxon>Cyanobacteriota</taxon>
        <taxon>Cyanophyceae</taxon>
        <taxon>Nostocales</taxon>
        <taxon>Nostocaceae</taxon>
        <taxon>Nostoc</taxon>
    </lineage>
</organism>
<dbReference type="EMBL" id="M92437">
    <property type="protein sequence ID" value="AAA25512.1"/>
    <property type="molecule type" value="Genomic_DNA"/>
</dbReference>
<dbReference type="EMBL" id="L23514">
    <property type="protein sequence ID" value="AAA21837.1"/>
    <property type="molecule type" value="Genomic_DNA"/>
</dbReference>
<dbReference type="SMR" id="Q00812"/>
<dbReference type="GO" id="GO:0016020">
    <property type="term" value="C:membrane"/>
    <property type="evidence" value="ECO:0007669"/>
    <property type="project" value="UniProtKB-SubCell"/>
</dbReference>
<dbReference type="GO" id="GO:0020037">
    <property type="term" value="F:heme binding"/>
    <property type="evidence" value="ECO:0007669"/>
    <property type="project" value="InterPro"/>
</dbReference>
<dbReference type="GO" id="GO:0046872">
    <property type="term" value="F:metal ion binding"/>
    <property type="evidence" value="ECO:0007669"/>
    <property type="project" value="UniProtKB-KW"/>
</dbReference>
<dbReference type="GO" id="GO:0019825">
    <property type="term" value="F:oxygen binding"/>
    <property type="evidence" value="ECO:0007669"/>
    <property type="project" value="InterPro"/>
</dbReference>
<dbReference type="GO" id="GO:0005344">
    <property type="term" value="F:oxygen carrier activity"/>
    <property type="evidence" value="ECO:0007669"/>
    <property type="project" value="UniProtKB-KW"/>
</dbReference>
<dbReference type="CDD" id="cd00454">
    <property type="entry name" value="TrHb1_N"/>
    <property type="match status" value="1"/>
</dbReference>
<dbReference type="Gene3D" id="1.10.490.10">
    <property type="entry name" value="Globins"/>
    <property type="match status" value="1"/>
</dbReference>
<dbReference type="InterPro" id="IPR009050">
    <property type="entry name" value="Globin-like_sf"/>
</dbReference>
<dbReference type="InterPro" id="IPR012292">
    <property type="entry name" value="Globin/Proto"/>
</dbReference>
<dbReference type="InterPro" id="IPR019795">
    <property type="entry name" value="Globin_bac-like_CS"/>
</dbReference>
<dbReference type="InterPro" id="IPR001486">
    <property type="entry name" value="Hemoglobin_trunc"/>
</dbReference>
<dbReference type="InterPro" id="IPR016339">
    <property type="entry name" value="Hemoglobin_trunc_I"/>
</dbReference>
<dbReference type="Pfam" id="PF01152">
    <property type="entry name" value="Bac_globin"/>
    <property type="match status" value="1"/>
</dbReference>
<dbReference type="PIRSF" id="PIRSF002030">
    <property type="entry name" value="Globin_Protozoa/Cyanobacteria"/>
    <property type="match status" value="1"/>
</dbReference>
<dbReference type="SUPFAM" id="SSF46458">
    <property type="entry name" value="Globin-like"/>
    <property type="match status" value="1"/>
</dbReference>
<dbReference type="PROSITE" id="PS01213">
    <property type="entry name" value="GLOBIN_FAM_2"/>
    <property type="match status" value="1"/>
</dbReference>
<evidence type="ECO:0000250" key="1"/>
<evidence type="ECO:0000255" key="2"/>
<evidence type="ECO:0000305" key="3"/>
<feature type="chain" id="PRO_0000162644" description="Group 1 truncated hemoglobin GlbN">
    <location>
        <begin position="1"/>
        <end position="118"/>
    </location>
</feature>
<feature type="binding site" description="proximal binding residue" evidence="2">
    <location>
        <position position="70"/>
    </location>
    <ligand>
        <name>heme</name>
        <dbReference type="ChEBI" id="CHEBI:30413"/>
    </ligand>
    <ligandPart>
        <name>Fe</name>
        <dbReference type="ChEBI" id="CHEBI:18248"/>
    </ligandPart>
</feature>
<protein>
    <recommendedName>
        <fullName>Group 1 truncated hemoglobin GlbN</fullName>
        <shortName>Truncated Hb</shortName>
    </recommendedName>
    <alternativeName>
        <fullName>Cyanoglobin</fullName>
    </alternativeName>
</protein>
<gene>
    <name type="primary">glbN</name>
</gene>
<reference key="1">
    <citation type="journal article" date="1992" name="Science">
        <title>Myoglobin in a cyanobacterium.</title>
        <authorList>
            <person name="Potts M."/>
            <person name="Angeloni S.V."/>
            <person name="Ebel R.E."/>
            <person name="Bassam D."/>
        </authorList>
    </citation>
    <scope>NUCLEOTIDE SEQUENCE [GENOMIC DNA]</scope>
    <source>
        <strain>UTEX 584 / SAG 1453-5</strain>
    </source>
</reference>
<reference key="2">
    <citation type="journal article" date="1994" name="Gene">
        <title>Analysis of the sequences within and flanking the cyanoglobin-encoding gene, glbN, of the cyanobacterium Nostoc commune UTEX 584.</title>
        <authorList>
            <person name="Angeloni S.V."/>
            <person name="Potts M."/>
        </authorList>
    </citation>
    <scope>NUCLEOTIDE SEQUENCE [GENOMIC DNA]</scope>
    <source>
        <strain>UTEX 584 / SAG 1453-5</strain>
    </source>
</reference>
<name>TRHBN_NOSCO</name>
<sequence>MSTLYDNIGGQPAIEQVVDELHKRIATDSLLAPVFAGTDMVKQRNHLVAFLAQIFEGPKQYGGRPMDKTHAGLNLQQPHFDAIAKHLGERMAVRGVSAENTKAALDRVTNMKGAILNK</sequence>
<accession>Q00812</accession>
<comment type="cofactor">
    <cofactor evidence="1">
        <name>heme</name>
        <dbReference type="ChEBI" id="CHEBI:30413"/>
    </cofactor>
    <text evidence="1">Binds 1 heme group per subunit.</text>
</comment>
<comment type="subunit">
    <text>Monomer.</text>
</comment>
<comment type="subcellular location">
    <subcellularLocation>
        <location>Membrane</location>
        <topology>Peripheral membrane protein</topology>
    </subcellularLocation>
</comment>
<comment type="similarity">
    <text evidence="3">Belongs to the truncated hemoglobin family. Group I subfamily.</text>
</comment>
<proteinExistence type="inferred from homology"/>
<keyword id="KW-0349">Heme</keyword>
<keyword id="KW-0408">Iron</keyword>
<keyword id="KW-0472">Membrane</keyword>
<keyword id="KW-0479">Metal-binding</keyword>
<keyword id="KW-0561">Oxygen transport</keyword>
<keyword id="KW-0813">Transport</keyword>